<evidence type="ECO:0000255" key="1">
    <source>
        <dbReference type="HAMAP-Rule" id="MF_01325"/>
    </source>
</evidence>
<evidence type="ECO:0000256" key="2">
    <source>
        <dbReference type="SAM" id="MobiDB-lite"/>
    </source>
</evidence>
<evidence type="ECO:0000305" key="3"/>
<proteinExistence type="inferred from homology"/>
<comment type="function">
    <text evidence="1">One of the primary rRNA binding proteins, it binds directly near the 3'-end of the 23S rRNA, where it nucleates assembly of the 50S subunit.</text>
</comment>
<comment type="subunit">
    <text evidence="1">Part of the 50S ribosomal subunit. Forms a cluster with proteins L14 and L19.</text>
</comment>
<comment type="PTM">
    <text evidence="1">Methylated by PrmB.</text>
</comment>
<comment type="similarity">
    <text evidence="1">Belongs to the universal ribosomal protein uL3 family.</text>
</comment>
<reference key="1">
    <citation type="submission" date="2007-12" db="EMBL/GenBank/DDBJ databases">
        <title>Complete sequence of Methylobacterium extorquens PA1.</title>
        <authorList>
            <consortium name="US DOE Joint Genome Institute"/>
            <person name="Copeland A."/>
            <person name="Lucas S."/>
            <person name="Lapidus A."/>
            <person name="Barry K."/>
            <person name="Glavina del Rio T."/>
            <person name="Dalin E."/>
            <person name="Tice H."/>
            <person name="Pitluck S."/>
            <person name="Saunders E."/>
            <person name="Brettin T."/>
            <person name="Bruce D."/>
            <person name="Detter J.C."/>
            <person name="Han C."/>
            <person name="Schmutz J."/>
            <person name="Larimer F."/>
            <person name="Land M."/>
            <person name="Hauser L."/>
            <person name="Kyrpides N."/>
            <person name="Kim E."/>
            <person name="Marx C."/>
            <person name="Richardson P."/>
        </authorList>
    </citation>
    <scope>NUCLEOTIDE SEQUENCE [LARGE SCALE GENOMIC DNA]</scope>
    <source>
        <strain>PA1</strain>
    </source>
</reference>
<accession>A9W4Q1</accession>
<gene>
    <name evidence="1" type="primary">rplC</name>
    <name type="ordered locus">Mext_2162</name>
</gene>
<dbReference type="EMBL" id="CP000908">
    <property type="protein sequence ID" value="ABY30557.1"/>
    <property type="molecule type" value="Genomic_DNA"/>
</dbReference>
<dbReference type="RefSeq" id="WP_003597090.1">
    <property type="nucleotide sequence ID" value="NC_010172.1"/>
</dbReference>
<dbReference type="SMR" id="A9W4Q1"/>
<dbReference type="GeneID" id="72989850"/>
<dbReference type="KEGG" id="mex:Mext_2162"/>
<dbReference type="eggNOG" id="COG0087">
    <property type="taxonomic scope" value="Bacteria"/>
</dbReference>
<dbReference type="HOGENOM" id="CLU_044142_2_0_5"/>
<dbReference type="BioCyc" id="MEXT419610:MEXT_RS10915-MONOMER"/>
<dbReference type="GO" id="GO:0022625">
    <property type="term" value="C:cytosolic large ribosomal subunit"/>
    <property type="evidence" value="ECO:0007669"/>
    <property type="project" value="TreeGrafter"/>
</dbReference>
<dbReference type="GO" id="GO:0019843">
    <property type="term" value="F:rRNA binding"/>
    <property type="evidence" value="ECO:0007669"/>
    <property type="project" value="UniProtKB-UniRule"/>
</dbReference>
<dbReference type="GO" id="GO:0003735">
    <property type="term" value="F:structural constituent of ribosome"/>
    <property type="evidence" value="ECO:0007669"/>
    <property type="project" value="InterPro"/>
</dbReference>
<dbReference type="GO" id="GO:0006412">
    <property type="term" value="P:translation"/>
    <property type="evidence" value="ECO:0007669"/>
    <property type="project" value="UniProtKB-UniRule"/>
</dbReference>
<dbReference type="FunFam" id="2.40.30.10:FF:000004">
    <property type="entry name" value="50S ribosomal protein L3"/>
    <property type="match status" value="1"/>
</dbReference>
<dbReference type="FunFam" id="3.30.160.810:FF:000001">
    <property type="entry name" value="50S ribosomal protein L3"/>
    <property type="match status" value="1"/>
</dbReference>
<dbReference type="Gene3D" id="3.30.160.810">
    <property type="match status" value="1"/>
</dbReference>
<dbReference type="Gene3D" id="2.40.30.10">
    <property type="entry name" value="Translation factors"/>
    <property type="match status" value="1"/>
</dbReference>
<dbReference type="HAMAP" id="MF_01325_B">
    <property type="entry name" value="Ribosomal_uL3_B"/>
    <property type="match status" value="1"/>
</dbReference>
<dbReference type="InterPro" id="IPR000597">
    <property type="entry name" value="Ribosomal_uL3"/>
</dbReference>
<dbReference type="InterPro" id="IPR019927">
    <property type="entry name" value="Ribosomal_uL3_bac/org-type"/>
</dbReference>
<dbReference type="InterPro" id="IPR019926">
    <property type="entry name" value="Ribosomal_uL3_CS"/>
</dbReference>
<dbReference type="InterPro" id="IPR009000">
    <property type="entry name" value="Transl_B-barrel_sf"/>
</dbReference>
<dbReference type="NCBIfam" id="TIGR03625">
    <property type="entry name" value="L3_bact"/>
    <property type="match status" value="1"/>
</dbReference>
<dbReference type="PANTHER" id="PTHR11229">
    <property type="entry name" value="50S RIBOSOMAL PROTEIN L3"/>
    <property type="match status" value="1"/>
</dbReference>
<dbReference type="PANTHER" id="PTHR11229:SF16">
    <property type="entry name" value="LARGE RIBOSOMAL SUBUNIT PROTEIN UL3C"/>
    <property type="match status" value="1"/>
</dbReference>
<dbReference type="Pfam" id="PF00297">
    <property type="entry name" value="Ribosomal_L3"/>
    <property type="match status" value="1"/>
</dbReference>
<dbReference type="SUPFAM" id="SSF50447">
    <property type="entry name" value="Translation proteins"/>
    <property type="match status" value="1"/>
</dbReference>
<dbReference type="PROSITE" id="PS00474">
    <property type="entry name" value="RIBOSOMAL_L3"/>
    <property type="match status" value="1"/>
</dbReference>
<feature type="chain" id="PRO_1000141885" description="Large ribosomal subunit protein uL3">
    <location>
        <begin position="1"/>
        <end position="246"/>
    </location>
</feature>
<feature type="region of interest" description="Disordered" evidence="2">
    <location>
        <begin position="140"/>
        <end position="162"/>
    </location>
</feature>
<feature type="region of interest" description="Disordered" evidence="2">
    <location>
        <begin position="215"/>
        <end position="246"/>
    </location>
</feature>
<feature type="compositionally biased region" description="Low complexity" evidence="2">
    <location>
        <begin position="234"/>
        <end position="246"/>
    </location>
</feature>
<feature type="modified residue" description="N5-methylglutamine" evidence="1">
    <location>
        <position position="151"/>
    </location>
</feature>
<sequence>MRSGVIARKVGMTRVFTDAGEHVPVTVLQIDQCQVVAHRTTEKDGYVALQVGVGKAKVKNVSQAERGRFAVAKVEPKKKLAEFRVSEDALIPVGAEITADHFIPGQFVDVTGTSTGKGFAGGMKRWNFGGLRATHGVSISHRSIGSTGGRQDPGKTFKNKKMPGHLGVERVTTQNLKVVRTDPERGLILVEGAVPGVAGGWIQVRDSVKRKLPADVPLPGKFRENGSAGASQVEAAPEAPASEENA</sequence>
<keyword id="KW-0488">Methylation</keyword>
<keyword id="KW-0687">Ribonucleoprotein</keyword>
<keyword id="KW-0689">Ribosomal protein</keyword>
<keyword id="KW-0694">RNA-binding</keyword>
<keyword id="KW-0699">rRNA-binding</keyword>
<protein>
    <recommendedName>
        <fullName evidence="1">Large ribosomal subunit protein uL3</fullName>
    </recommendedName>
    <alternativeName>
        <fullName evidence="3">50S ribosomal protein L3</fullName>
    </alternativeName>
</protein>
<organism>
    <name type="scientific">Methylorubrum extorquens (strain PA1)</name>
    <name type="common">Methylobacterium extorquens</name>
    <dbReference type="NCBI Taxonomy" id="419610"/>
    <lineage>
        <taxon>Bacteria</taxon>
        <taxon>Pseudomonadati</taxon>
        <taxon>Pseudomonadota</taxon>
        <taxon>Alphaproteobacteria</taxon>
        <taxon>Hyphomicrobiales</taxon>
        <taxon>Methylobacteriaceae</taxon>
        <taxon>Methylorubrum</taxon>
    </lineage>
</organism>
<name>RL3_METEP</name>